<protein>
    <recommendedName>
        <fullName>Protein FAM151B</fullName>
    </recommendedName>
</protein>
<organism>
    <name type="scientific">Mus musculus</name>
    <name type="common">Mouse</name>
    <dbReference type="NCBI Taxonomy" id="10090"/>
    <lineage>
        <taxon>Eukaryota</taxon>
        <taxon>Metazoa</taxon>
        <taxon>Chordata</taxon>
        <taxon>Craniata</taxon>
        <taxon>Vertebrata</taxon>
        <taxon>Euteleostomi</taxon>
        <taxon>Mammalia</taxon>
        <taxon>Eutheria</taxon>
        <taxon>Euarchontoglires</taxon>
        <taxon>Glires</taxon>
        <taxon>Rodentia</taxon>
        <taxon>Myomorpha</taxon>
        <taxon>Muroidea</taxon>
        <taxon>Muridae</taxon>
        <taxon>Murinae</taxon>
        <taxon>Mus</taxon>
        <taxon>Mus</taxon>
    </lineage>
</organism>
<reference key="1">
    <citation type="journal article" date="2009" name="PLoS Biol.">
        <title>Lineage-specific biology revealed by a finished genome assembly of the mouse.</title>
        <authorList>
            <person name="Church D.M."/>
            <person name="Goodstadt L."/>
            <person name="Hillier L.W."/>
            <person name="Zody M.C."/>
            <person name="Goldstein S."/>
            <person name="She X."/>
            <person name="Bult C.J."/>
            <person name="Agarwala R."/>
            <person name="Cherry J.L."/>
            <person name="DiCuccio M."/>
            <person name="Hlavina W."/>
            <person name="Kapustin Y."/>
            <person name="Meric P."/>
            <person name="Maglott D."/>
            <person name="Birtle Z."/>
            <person name="Marques A.C."/>
            <person name="Graves T."/>
            <person name="Zhou S."/>
            <person name="Teague B."/>
            <person name="Potamousis K."/>
            <person name="Churas C."/>
            <person name="Place M."/>
            <person name="Herschleb J."/>
            <person name="Runnheim R."/>
            <person name="Forrest D."/>
            <person name="Amos-Landgraf J."/>
            <person name="Schwartz D.C."/>
            <person name="Cheng Z."/>
            <person name="Lindblad-Toh K."/>
            <person name="Eichler E.E."/>
            <person name="Ponting C.P."/>
        </authorList>
    </citation>
    <scope>NUCLEOTIDE SEQUENCE [LARGE SCALE GENOMIC DNA]</scope>
    <source>
        <strain>C57BL/6J</strain>
    </source>
</reference>
<reference key="2">
    <citation type="journal article" date="2010" name="Cell">
        <title>A tissue-specific atlas of mouse protein phosphorylation and expression.</title>
        <authorList>
            <person name="Huttlin E.L."/>
            <person name="Jedrychowski M.P."/>
            <person name="Elias J.E."/>
            <person name="Goswami T."/>
            <person name="Rad R."/>
            <person name="Beausoleil S.A."/>
            <person name="Villen J."/>
            <person name="Haas W."/>
            <person name="Sowa M.E."/>
            <person name="Gygi S.P."/>
        </authorList>
    </citation>
    <scope>IDENTIFICATION BY MASS SPECTROMETRY [LARGE SCALE ANALYSIS]</scope>
</reference>
<reference key="3">
    <citation type="journal article" date="2020" name="Sci. Rep.">
        <title>Fam151b, the mouse homologue of C.elegans menorin gene, is essential for retinal function.</title>
        <authorList>
            <person name="Findlay A.S."/>
            <person name="McKie L."/>
            <person name="Keighren M."/>
            <person name="Clementson-Mobbs S."/>
            <person name="Sanchez-Pulido L."/>
            <person name="Wells S."/>
            <person name="Cross S.H."/>
            <person name="Jackson I.J."/>
        </authorList>
    </citation>
    <scope>FUNCTION</scope>
    <scope>DISRUPTION PHENOTYPE</scope>
</reference>
<proteinExistence type="evidence at protein level"/>
<evidence type="ECO:0000269" key="1">
    <source>
    </source>
</evidence>
<evidence type="ECO:0000305" key="2"/>
<feature type="chain" id="PRO_0000458941" description="Protein FAM151B">
    <location>
        <begin position="1"/>
        <end position="279"/>
    </location>
</feature>
<keyword id="KW-1185">Reference proteome</keyword>
<name>F151B_MOUSE</name>
<accession>D3YUE4</accession>
<gene>
    <name type="primary">Fam151b</name>
</gene>
<comment type="function">
    <text evidence="1">Essential for survival of retinal photoreceptor cells.</text>
</comment>
<comment type="disruption phenotype">
    <text evidence="1">Mice show a degenerative retinal phenotype at week 15, characterized by patchy pigmentation of the retina. They have no photoreceptor function from eye opening. During development of the eye the correct number of cells are produced and the layers of the retina differentiate normally. However, after eye opening at P14, eyes exhibit signs of retinal stress and rapidly lose photoreceptor cells.</text>
</comment>
<comment type="similarity">
    <text evidence="2">Belongs to the menorin family.</text>
</comment>
<sequence length="279" mass="31409">MAACAGGPGSWSENILKYFLRNNQITAEDGAEILWSHAANHKSQMNEALKSAAHMIEADVLLPSDGSEHGQPIMAHPPETSSDNTLQEWLAEVVKSNKGIKLDFKSLAAVRASMLFLDNMKQHLQRPVWINADILPGPNGSSKVVDAKAFLDTVTSFFPDVTFSLGWTTGWHPEKVNEGYSWSMVKEMDYICSELTQPVTFPVRAALVRQSCPQLLWLLTKSNRYSLTVWTGKDDIYSTEDLLYIRDYFNKTQVFYDISEPQNHEFKQAIGIRGHSLRI</sequence>
<dbReference type="EMBL" id="AC154363">
    <property type="status" value="NOT_ANNOTATED_CDS"/>
    <property type="molecule type" value="Genomic_DNA"/>
</dbReference>
<dbReference type="CCDS" id="CCDS49327.1"/>
<dbReference type="RefSeq" id="NP_001157099.1">
    <property type="nucleotide sequence ID" value="NM_001163627.1"/>
</dbReference>
<dbReference type="SMR" id="D3YUE4"/>
<dbReference type="FunCoup" id="D3YUE4">
    <property type="interactions" value="393"/>
</dbReference>
<dbReference type="STRING" id="10090.ENSMUSP00000045024"/>
<dbReference type="PhosphoSitePlus" id="D3YUE4"/>
<dbReference type="PaxDb" id="10090-ENSMUSP00000045024"/>
<dbReference type="PeptideAtlas" id="D3YUE4"/>
<dbReference type="ProteomicsDB" id="356964"/>
<dbReference type="Antibodypedia" id="49116">
    <property type="antibodies" value="50 antibodies from 10 providers"/>
</dbReference>
<dbReference type="Ensembl" id="ENSMUST00000040106.9">
    <property type="protein sequence ID" value="ENSMUSP00000045024.8"/>
    <property type="gene ID" value="ENSMUSG00000034334.9"/>
</dbReference>
<dbReference type="GeneID" id="73942"/>
<dbReference type="KEGG" id="mmu:73942"/>
<dbReference type="UCSC" id="uc007rkp.2">
    <property type="organism name" value="mouse"/>
</dbReference>
<dbReference type="AGR" id="MGI:1921192"/>
<dbReference type="CTD" id="167555"/>
<dbReference type="MGI" id="MGI:1921192">
    <property type="gene designation" value="Fam151b"/>
</dbReference>
<dbReference type="VEuPathDB" id="HostDB:ENSMUSG00000034334"/>
<dbReference type="eggNOG" id="KOG3748">
    <property type="taxonomic scope" value="Eukaryota"/>
</dbReference>
<dbReference type="GeneTree" id="ENSGT00530000063681"/>
<dbReference type="HOGENOM" id="CLU_033162_1_1_1"/>
<dbReference type="InParanoid" id="D3YUE4"/>
<dbReference type="OMA" id="GFTLWWA"/>
<dbReference type="OrthoDB" id="413402at2759"/>
<dbReference type="PhylomeDB" id="D3YUE4"/>
<dbReference type="TreeFam" id="TF315079"/>
<dbReference type="BioGRID-ORCS" id="73942">
    <property type="hits" value="1 hit in 77 CRISPR screens"/>
</dbReference>
<dbReference type="PRO" id="PR:D3YUE4"/>
<dbReference type="Proteomes" id="UP000000589">
    <property type="component" value="Chromosome 13"/>
</dbReference>
<dbReference type="RNAct" id="D3YUE4">
    <property type="molecule type" value="protein"/>
</dbReference>
<dbReference type="Bgee" id="ENSMUSG00000034334">
    <property type="expression patterns" value="Expressed in spermatid and 141 other cell types or tissues"/>
</dbReference>
<dbReference type="ExpressionAtlas" id="D3YUE4">
    <property type="expression patterns" value="baseline and differential"/>
</dbReference>
<dbReference type="GO" id="GO:0042461">
    <property type="term" value="P:photoreceptor cell development"/>
    <property type="evidence" value="ECO:0000315"/>
    <property type="project" value="UniProtKB"/>
</dbReference>
<dbReference type="InterPro" id="IPR019356">
    <property type="entry name" value="Memorin"/>
</dbReference>
<dbReference type="PANTHER" id="PTHR21184">
    <property type="entry name" value="MENORIN (DENDRITIC BRANCHING PROTEIN)"/>
    <property type="match status" value="1"/>
</dbReference>
<dbReference type="PANTHER" id="PTHR21184:SF3">
    <property type="entry name" value="PROTEIN FAM151B"/>
    <property type="match status" value="1"/>
</dbReference>
<dbReference type="Pfam" id="PF10223">
    <property type="entry name" value="Menorin"/>
    <property type="match status" value="1"/>
</dbReference>